<accession>A8LMD0</accession>
<evidence type="ECO:0000255" key="1">
    <source>
        <dbReference type="HAMAP-Rule" id="MF_00139"/>
    </source>
</evidence>
<evidence type="ECO:0000255" key="2">
    <source>
        <dbReference type="PROSITE-ProRule" id="PRU01202"/>
    </source>
</evidence>
<gene>
    <name evidence="1" type="primary">purH</name>
    <name type="ordered locus">Dshi_0358</name>
</gene>
<comment type="catalytic activity">
    <reaction evidence="1">
        <text>(6R)-10-formyltetrahydrofolate + 5-amino-1-(5-phospho-beta-D-ribosyl)imidazole-4-carboxamide = 5-formamido-1-(5-phospho-D-ribosyl)imidazole-4-carboxamide + (6S)-5,6,7,8-tetrahydrofolate</text>
        <dbReference type="Rhea" id="RHEA:22192"/>
        <dbReference type="ChEBI" id="CHEBI:57453"/>
        <dbReference type="ChEBI" id="CHEBI:58467"/>
        <dbReference type="ChEBI" id="CHEBI:58475"/>
        <dbReference type="ChEBI" id="CHEBI:195366"/>
        <dbReference type="EC" id="2.1.2.3"/>
    </reaction>
</comment>
<comment type="catalytic activity">
    <reaction evidence="1">
        <text>IMP + H2O = 5-formamido-1-(5-phospho-D-ribosyl)imidazole-4-carboxamide</text>
        <dbReference type="Rhea" id="RHEA:18445"/>
        <dbReference type="ChEBI" id="CHEBI:15377"/>
        <dbReference type="ChEBI" id="CHEBI:58053"/>
        <dbReference type="ChEBI" id="CHEBI:58467"/>
        <dbReference type="EC" id="3.5.4.10"/>
    </reaction>
</comment>
<comment type="pathway">
    <text evidence="1">Purine metabolism; IMP biosynthesis via de novo pathway; 5-formamido-1-(5-phospho-D-ribosyl)imidazole-4-carboxamide from 5-amino-1-(5-phospho-D-ribosyl)imidazole-4-carboxamide (10-formyl THF route): step 1/1.</text>
</comment>
<comment type="pathway">
    <text evidence="1">Purine metabolism; IMP biosynthesis via de novo pathway; IMP from 5-formamido-1-(5-phospho-D-ribosyl)imidazole-4-carboxamide: step 1/1.</text>
</comment>
<comment type="domain">
    <text evidence="1">The IMP cyclohydrolase activity resides in the N-terminal region.</text>
</comment>
<comment type="similarity">
    <text evidence="1">Belongs to the PurH family.</text>
</comment>
<feature type="chain" id="PRO_1000076480" description="Bifunctional purine biosynthesis protein PurH">
    <location>
        <begin position="1"/>
        <end position="529"/>
    </location>
</feature>
<feature type="domain" description="MGS-like" evidence="2">
    <location>
        <begin position="2"/>
        <end position="149"/>
    </location>
</feature>
<protein>
    <recommendedName>
        <fullName evidence="1">Bifunctional purine biosynthesis protein PurH</fullName>
    </recommendedName>
    <domain>
        <recommendedName>
            <fullName evidence="1">Phosphoribosylaminoimidazolecarboxamide formyltransferase</fullName>
            <ecNumber evidence="1">2.1.2.3</ecNumber>
        </recommendedName>
        <alternativeName>
            <fullName evidence="1">AICAR transformylase</fullName>
        </alternativeName>
    </domain>
    <domain>
        <recommendedName>
            <fullName evidence="1">IMP cyclohydrolase</fullName>
            <ecNumber evidence="1">3.5.4.10</ecNumber>
        </recommendedName>
        <alternativeName>
            <fullName evidence="1">ATIC</fullName>
        </alternativeName>
        <alternativeName>
            <fullName evidence="1">IMP synthase</fullName>
        </alternativeName>
        <alternativeName>
            <fullName evidence="1">Inosinicase</fullName>
        </alternativeName>
    </domain>
</protein>
<organism>
    <name type="scientific">Dinoroseobacter shibae (strain DSM 16493 / NCIMB 14021 / DFL 12)</name>
    <dbReference type="NCBI Taxonomy" id="398580"/>
    <lineage>
        <taxon>Bacteria</taxon>
        <taxon>Pseudomonadati</taxon>
        <taxon>Pseudomonadota</taxon>
        <taxon>Alphaproteobacteria</taxon>
        <taxon>Rhodobacterales</taxon>
        <taxon>Roseobacteraceae</taxon>
        <taxon>Dinoroseobacter</taxon>
    </lineage>
</organism>
<dbReference type="EC" id="2.1.2.3" evidence="1"/>
<dbReference type="EC" id="3.5.4.10" evidence="1"/>
<dbReference type="EMBL" id="CP000830">
    <property type="protein sequence ID" value="ABV92107.1"/>
    <property type="molecule type" value="Genomic_DNA"/>
</dbReference>
<dbReference type="RefSeq" id="WP_012177037.1">
    <property type="nucleotide sequence ID" value="NC_009952.1"/>
</dbReference>
<dbReference type="SMR" id="A8LMD0"/>
<dbReference type="STRING" id="398580.Dshi_0358"/>
<dbReference type="KEGG" id="dsh:Dshi_0358"/>
<dbReference type="eggNOG" id="COG0138">
    <property type="taxonomic scope" value="Bacteria"/>
</dbReference>
<dbReference type="HOGENOM" id="CLU_016316_5_2_5"/>
<dbReference type="OrthoDB" id="9802065at2"/>
<dbReference type="UniPathway" id="UPA00074">
    <property type="reaction ID" value="UER00133"/>
</dbReference>
<dbReference type="UniPathway" id="UPA00074">
    <property type="reaction ID" value="UER00135"/>
</dbReference>
<dbReference type="Proteomes" id="UP000006833">
    <property type="component" value="Chromosome"/>
</dbReference>
<dbReference type="GO" id="GO:0005829">
    <property type="term" value="C:cytosol"/>
    <property type="evidence" value="ECO:0007669"/>
    <property type="project" value="TreeGrafter"/>
</dbReference>
<dbReference type="GO" id="GO:0003937">
    <property type="term" value="F:IMP cyclohydrolase activity"/>
    <property type="evidence" value="ECO:0007669"/>
    <property type="project" value="UniProtKB-UniRule"/>
</dbReference>
<dbReference type="GO" id="GO:0004643">
    <property type="term" value="F:phosphoribosylaminoimidazolecarboxamide formyltransferase activity"/>
    <property type="evidence" value="ECO:0007669"/>
    <property type="project" value="UniProtKB-UniRule"/>
</dbReference>
<dbReference type="GO" id="GO:0006189">
    <property type="term" value="P:'de novo' IMP biosynthetic process"/>
    <property type="evidence" value="ECO:0007669"/>
    <property type="project" value="UniProtKB-UniRule"/>
</dbReference>
<dbReference type="CDD" id="cd01421">
    <property type="entry name" value="IMPCH"/>
    <property type="match status" value="1"/>
</dbReference>
<dbReference type="FunFam" id="3.40.140.20:FF:000001">
    <property type="entry name" value="Bifunctional purine biosynthesis protein PurH"/>
    <property type="match status" value="1"/>
</dbReference>
<dbReference type="FunFam" id="3.40.140.20:FF:000002">
    <property type="entry name" value="Bifunctional purine biosynthesis protein PurH"/>
    <property type="match status" value="1"/>
</dbReference>
<dbReference type="FunFam" id="3.40.50.1380:FF:000001">
    <property type="entry name" value="Bifunctional purine biosynthesis protein PurH"/>
    <property type="match status" value="1"/>
</dbReference>
<dbReference type="Gene3D" id="3.40.140.20">
    <property type="match status" value="2"/>
</dbReference>
<dbReference type="Gene3D" id="3.40.50.1380">
    <property type="entry name" value="Methylglyoxal synthase-like domain"/>
    <property type="match status" value="1"/>
</dbReference>
<dbReference type="HAMAP" id="MF_00139">
    <property type="entry name" value="PurH"/>
    <property type="match status" value="1"/>
</dbReference>
<dbReference type="InterPro" id="IPR024051">
    <property type="entry name" value="AICAR_Tfase_dup_dom_sf"/>
</dbReference>
<dbReference type="InterPro" id="IPR016193">
    <property type="entry name" value="Cytidine_deaminase-like"/>
</dbReference>
<dbReference type="InterPro" id="IPR011607">
    <property type="entry name" value="MGS-like_dom"/>
</dbReference>
<dbReference type="InterPro" id="IPR036914">
    <property type="entry name" value="MGS-like_dom_sf"/>
</dbReference>
<dbReference type="InterPro" id="IPR002695">
    <property type="entry name" value="PurH-like"/>
</dbReference>
<dbReference type="NCBIfam" id="NF002049">
    <property type="entry name" value="PRK00881.1"/>
    <property type="match status" value="1"/>
</dbReference>
<dbReference type="NCBIfam" id="TIGR00355">
    <property type="entry name" value="purH"/>
    <property type="match status" value="1"/>
</dbReference>
<dbReference type="PANTHER" id="PTHR11692:SF0">
    <property type="entry name" value="BIFUNCTIONAL PURINE BIOSYNTHESIS PROTEIN ATIC"/>
    <property type="match status" value="1"/>
</dbReference>
<dbReference type="PANTHER" id="PTHR11692">
    <property type="entry name" value="BIFUNCTIONAL PURINE BIOSYNTHESIS PROTEIN PURH"/>
    <property type="match status" value="1"/>
</dbReference>
<dbReference type="Pfam" id="PF01808">
    <property type="entry name" value="AICARFT_IMPCHas"/>
    <property type="match status" value="1"/>
</dbReference>
<dbReference type="Pfam" id="PF02142">
    <property type="entry name" value="MGS"/>
    <property type="match status" value="1"/>
</dbReference>
<dbReference type="PIRSF" id="PIRSF000414">
    <property type="entry name" value="AICARFT_IMPCHas"/>
    <property type="match status" value="1"/>
</dbReference>
<dbReference type="SMART" id="SM00798">
    <property type="entry name" value="AICARFT_IMPCHas"/>
    <property type="match status" value="1"/>
</dbReference>
<dbReference type="SMART" id="SM00851">
    <property type="entry name" value="MGS"/>
    <property type="match status" value="1"/>
</dbReference>
<dbReference type="SUPFAM" id="SSF53927">
    <property type="entry name" value="Cytidine deaminase-like"/>
    <property type="match status" value="1"/>
</dbReference>
<dbReference type="SUPFAM" id="SSF52335">
    <property type="entry name" value="Methylglyoxal synthase-like"/>
    <property type="match status" value="1"/>
</dbReference>
<dbReference type="PROSITE" id="PS51855">
    <property type="entry name" value="MGS"/>
    <property type="match status" value="1"/>
</dbReference>
<proteinExistence type="inferred from homology"/>
<reference key="1">
    <citation type="journal article" date="2010" name="ISME J.">
        <title>The complete genome sequence of the algal symbiont Dinoroseobacter shibae: a hitchhiker's guide to life in the sea.</title>
        <authorList>
            <person name="Wagner-Dobler I."/>
            <person name="Ballhausen B."/>
            <person name="Berger M."/>
            <person name="Brinkhoff T."/>
            <person name="Buchholz I."/>
            <person name="Bunk B."/>
            <person name="Cypionka H."/>
            <person name="Daniel R."/>
            <person name="Drepper T."/>
            <person name="Gerdts G."/>
            <person name="Hahnke S."/>
            <person name="Han C."/>
            <person name="Jahn D."/>
            <person name="Kalhoefer D."/>
            <person name="Kiss H."/>
            <person name="Klenk H.P."/>
            <person name="Kyrpides N."/>
            <person name="Liebl W."/>
            <person name="Liesegang H."/>
            <person name="Meincke L."/>
            <person name="Pati A."/>
            <person name="Petersen J."/>
            <person name="Piekarski T."/>
            <person name="Pommerenke C."/>
            <person name="Pradella S."/>
            <person name="Pukall R."/>
            <person name="Rabus R."/>
            <person name="Stackebrandt E."/>
            <person name="Thole S."/>
            <person name="Thompson L."/>
            <person name="Tielen P."/>
            <person name="Tomasch J."/>
            <person name="von Jan M."/>
            <person name="Wanphrut N."/>
            <person name="Wichels A."/>
            <person name="Zech H."/>
            <person name="Simon M."/>
        </authorList>
    </citation>
    <scope>NUCLEOTIDE SEQUENCE [LARGE SCALE GENOMIC DNA]</scope>
    <source>
        <strain>DSM 16493 / NCIMB 14021 / DFL 12</strain>
    </source>
</reference>
<sequence>MTDLVPLRRALLSVSDKTGLVPLGQALAARGVELLSTGGTAKALREAGLDVVDVSDVTGFPEMMDGRVKTLHPKVHGGLLALRDNAAHVSAMERHGIGAIDLLVVNLYPFEATVAAGADYAACIENIDIGGPAMIRAAAKNHSFVTVLTDVEDYEALLGELEAREGATGYPFRQKMALNAYARTAAYDAAVSGWMTDALAEVAPRRRAVAGTLAQTLRYGENPHQGAAFYVDGSDRPGVATAVQHQGKELSYNNINDTDAAFELVAEFAPEDGPACAIIKHANPCGVARGATLAEAYTKAFQCDQTSAFGGIIALNRPLDGPTAEAISGIFTEVVIAPGADETARAVFAAKKNLRLLTTEGLPDPKAPALTVRQVSGGYLVQDKDNGNIGWDDLKVVTKRAPSEAEIADLLFAWKVAKHVKSNAIVYVKDGATVGVGAGQMSRVDSARIAARKSADMAEALGLETPLIQGSVVASDAFFPFPDGLLTAAEAGATAVIQPGGSMRDVEVIAAADAAGLAMVFTGMRHFRH</sequence>
<name>PUR9_DINSH</name>
<keyword id="KW-0378">Hydrolase</keyword>
<keyword id="KW-0511">Multifunctional enzyme</keyword>
<keyword id="KW-0658">Purine biosynthesis</keyword>
<keyword id="KW-1185">Reference proteome</keyword>
<keyword id="KW-0808">Transferase</keyword>